<gene>
    <name evidence="1" type="primary">coaX</name>
    <name type="ordered locus">mma_3239</name>
</gene>
<proteinExistence type="inferred from homology"/>
<organism>
    <name type="scientific">Janthinobacterium sp. (strain Marseille)</name>
    <name type="common">Minibacterium massiliensis</name>
    <dbReference type="NCBI Taxonomy" id="375286"/>
    <lineage>
        <taxon>Bacteria</taxon>
        <taxon>Pseudomonadati</taxon>
        <taxon>Pseudomonadota</taxon>
        <taxon>Betaproteobacteria</taxon>
        <taxon>Burkholderiales</taxon>
        <taxon>Oxalobacteraceae</taxon>
        <taxon>Janthinobacterium</taxon>
    </lineage>
</organism>
<accession>A6T332</accession>
<sequence length="260" mass="27073">MLLLVDAGNTRIKWALVDRSAPEQTPGKWLQQGSVARAEAGTLIEAWRGFSIGRVMLSNVAGHELRGELERAVLHTLGTRPVALEWFASAAELGGVRNRYLNPTQLGADRFAAAIGAHALFPEGPLVVATCGTATTVDALSAGGEFIGGMILPGLGLMASSLAKNTAQLPQVALQSTLTQPFADNTDAAIVSGCLAAQAGAIERAVAAQMRTYPNLPIPCILAGGAADLIAPHLSIDYTRVDNLVLIGLHTVAIQHSPTC</sequence>
<name>COAX_JANMA</name>
<reference key="1">
    <citation type="journal article" date="2007" name="PLoS Genet.">
        <title>Genome analysis of Minibacterium massiliensis highlights the convergent evolution of water-living bacteria.</title>
        <authorList>
            <person name="Audic S."/>
            <person name="Robert C."/>
            <person name="Campagna B."/>
            <person name="Parinello H."/>
            <person name="Claverie J.-M."/>
            <person name="Raoult D."/>
            <person name="Drancourt M."/>
        </authorList>
    </citation>
    <scope>NUCLEOTIDE SEQUENCE [LARGE SCALE GENOMIC DNA]</scope>
    <source>
        <strain>Marseille</strain>
    </source>
</reference>
<protein>
    <recommendedName>
        <fullName evidence="1">Type III pantothenate kinase</fullName>
        <ecNumber evidence="1">2.7.1.33</ecNumber>
    </recommendedName>
    <alternativeName>
        <fullName evidence="1">PanK-III</fullName>
    </alternativeName>
    <alternativeName>
        <fullName evidence="1">Pantothenic acid kinase</fullName>
    </alternativeName>
</protein>
<feature type="chain" id="PRO_1000054381" description="Type III pantothenate kinase">
    <location>
        <begin position="1"/>
        <end position="260"/>
    </location>
</feature>
<feature type="active site" description="Proton acceptor" evidence="1">
    <location>
        <position position="109"/>
    </location>
</feature>
<feature type="binding site" evidence="1">
    <location>
        <begin position="6"/>
        <end position="13"/>
    </location>
    <ligand>
        <name>ATP</name>
        <dbReference type="ChEBI" id="CHEBI:30616"/>
    </ligand>
</feature>
<feature type="binding site" evidence="1">
    <location>
        <position position="100"/>
    </location>
    <ligand>
        <name>substrate</name>
    </ligand>
</feature>
<feature type="binding site" evidence="1">
    <location>
        <begin position="107"/>
        <end position="110"/>
    </location>
    <ligand>
        <name>substrate</name>
    </ligand>
</feature>
<feature type="binding site" evidence="1">
    <location>
        <position position="133"/>
    </location>
    <ligand>
        <name>ATP</name>
        <dbReference type="ChEBI" id="CHEBI:30616"/>
    </ligand>
</feature>
<feature type="binding site" evidence="1">
    <location>
        <position position="186"/>
    </location>
    <ligand>
        <name>substrate</name>
    </ligand>
</feature>
<comment type="function">
    <text evidence="1">Catalyzes the phosphorylation of pantothenate (Pan), the first step in CoA biosynthesis.</text>
</comment>
<comment type="catalytic activity">
    <reaction evidence="1">
        <text>(R)-pantothenate + ATP = (R)-4'-phosphopantothenate + ADP + H(+)</text>
        <dbReference type="Rhea" id="RHEA:16373"/>
        <dbReference type="ChEBI" id="CHEBI:10986"/>
        <dbReference type="ChEBI" id="CHEBI:15378"/>
        <dbReference type="ChEBI" id="CHEBI:29032"/>
        <dbReference type="ChEBI" id="CHEBI:30616"/>
        <dbReference type="ChEBI" id="CHEBI:456216"/>
        <dbReference type="EC" id="2.7.1.33"/>
    </reaction>
</comment>
<comment type="cofactor">
    <cofactor evidence="1">
        <name>NH4(+)</name>
        <dbReference type="ChEBI" id="CHEBI:28938"/>
    </cofactor>
    <cofactor evidence="1">
        <name>K(+)</name>
        <dbReference type="ChEBI" id="CHEBI:29103"/>
    </cofactor>
    <text evidence="1">A monovalent cation. Ammonium or potassium.</text>
</comment>
<comment type="pathway">
    <text evidence="1">Cofactor biosynthesis; coenzyme A biosynthesis; CoA from (R)-pantothenate: step 1/5.</text>
</comment>
<comment type="subunit">
    <text evidence="1">Homodimer.</text>
</comment>
<comment type="subcellular location">
    <subcellularLocation>
        <location evidence="1">Cytoplasm</location>
    </subcellularLocation>
</comment>
<comment type="similarity">
    <text evidence="1">Belongs to the type III pantothenate kinase family.</text>
</comment>
<dbReference type="EC" id="2.7.1.33" evidence="1"/>
<dbReference type="EMBL" id="CP000269">
    <property type="protein sequence ID" value="ABR90085.1"/>
    <property type="molecule type" value="Genomic_DNA"/>
</dbReference>
<dbReference type="RefSeq" id="WP_012081082.1">
    <property type="nucleotide sequence ID" value="NC_009659.1"/>
</dbReference>
<dbReference type="SMR" id="A6T332"/>
<dbReference type="STRING" id="375286.mma_3239"/>
<dbReference type="KEGG" id="mms:mma_3239"/>
<dbReference type="eggNOG" id="COG1521">
    <property type="taxonomic scope" value="Bacteria"/>
</dbReference>
<dbReference type="HOGENOM" id="CLU_066627_0_0_4"/>
<dbReference type="OrthoDB" id="9781305at2"/>
<dbReference type="UniPathway" id="UPA00241">
    <property type="reaction ID" value="UER00352"/>
</dbReference>
<dbReference type="Proteomes" id="UP000006388">
    <property type="component" value="Chromosome"/>
</dbReference>
<dbReference type="GO" id="GO:0005737">
    <property type="term" value="C:cytoplasm"/>
    <property type="evidence" value="ECO:0007669"/>
    <property type="project" value="UniProtKB-SubCell"/>
</dbReference>
<dbReference type="GO" id="GO:0005524">
    <property type="term" value="F:ATP binding"/>
    <property type="evidence" value="ECO:0007669"/>
    <property type="project" value="UniProtKB-UniRule"/>
</dbReference>
<dbReference type="GO" id="GO:0004594">
    <property type="term" value="F:pantothenate kinase activity"/>
    <property type="evidence" value="ECO:0007669"/>
    <property type="project" value="UniProtKB-UniRule"/>
</dbReference>
<dbReference type="GO" id="GO:0015937">
    <property type="term" value="P:coenzyme A biosynthetic process"/>
    <property type="evidence" value="ECO:0007669"/>
    <property type="project" value="UniProtKB-UniRule"/>
</dbReference>
<dbReference type="CDD" id="cd24015">
    <property type="entry name" value="ASKHA_NBD_PanK-III"/>
    <property type="match status" value="1"/>
</dbReference>
<dbReference type="Gene3D" id="3.30.420.40">
    <property type="match status" value="2"/>
</dbReference>
<dbReference type="HAMAP" id="MF_01274">
    <property type="entry name" value="Pantothen_kinase_3"/>
    <property type="match status" value="1"/>
</dbReference>
<dbReference type="InterPro" id="IPR043129">
    <property type="entry name" value="ATPase_NBD"/>
</dbReference>
<dbReference type="InterPro" id="IPR004619">
    <property type="entry name" value="Type_III_PanK"/>
</dbReference>
<dbReference type="NCBIfam" id="TIGR00671">
    <property type="entry name" value="baf"/>
    <property type="match status" value="1"/>
</dbReference>
<dbReference type="PANTHER" id="PTHR34265">
    <property type="entry name" value="TYPE III PANTOTHENATE KINASE"/>
    <property type="match status" value="1"/>
</dbReference>
<dbReference type="PANTHER" id="PTHR34265:SF1">
    <property type="entry name" value="TYPE III PANTOTHENATE KINASE"/>
    <property type="match status" value="1"/>
</dbReference>
<dbReference type="Pfam" id="PF03309">
    <property type="entry name" value="Pan_kinase"/>
    <property type="match status" value="1"/>
</dbReference>
<dbReference type="SUPFAM" id="SSF53067">
    <property type="entry name" value="Actin-like ATPase domain"/>
    <property type="match status" value="2"/>
</dbReference>
<keyword id="KW-0067">ATP-binding</keyword>
<keyword id="KW-0173">Coenzyme A biosynthesis</keyword>
<keyword id="KW-0963">Cytoplasm</keyword>
<keyword id="KW-0418">Kinase</keyword>
<keyword id="KW-0547">Nucleotide-binding</keyword>
<keyword id="KW-0630">Potassium</keyword>
<keyword id="KW-0808">Transferase</keyword>
<evidence type="ECO:0000255" key="1">
    <source>
        <dbReference type="HAMAP-Rule" id="MF_01274"/>
    </source>
</evidence>